<feature type="initiator methionine" description="Removed" evidence="3 4">
    <location>
        <position position="1"/>
    </location>
</feature>
<feature type="chain" id="PRO_0000067391" description="Retinol-binding protein 1">
    <location>
        <begin position="2"/>
        <end position="135"/>
    </location>
</feature>
<feature type="region of interest" description="Important for interaction with STRA6" evidence="1">
    <location>
        <begin position="22"/>
        <end position="32"/>
    </location>
</feature>
<feature type="binding site" evidence="1">
    <location>
        <position position="41"/>
    </location>
    <ligand>
        <name>all-trans-retinol</name>
        <dbReference type="ChEBI" id="CHEBI:17336"/>
    </ligand>
</feature>
<feature type="binding site" evidence="1">
    <location>
        <position position="63"/>
    </location>
    <ligand>
        <name>all-trans-retinol</name>
        <dbReference type="ChEBI" id="CHEBI:17336"/>
    </ligand>
</feature>
<feature type="binding site" evidence="1">
    <location>
        <position position="109"/>
    </location>
    <ligand>
        <name>all-trans-retinol</name>
        <dbReference type="ChEBI" id="CHEBI:17336"/>
    </ligand>
</feature>
<feature type="sequence conflict" description="In Ref. 4; AA sequence." evidence="5" ref="4">
    <original>A</original>
    <variation>G</variation>
    <location>
        <position position="23"/>
    </location>
</feature>
<feature type="sequence conflict" description="In Ref. 3; AA sequence." evidence="5" ref="3">
    <original>E</original>
    <variation>L</variation>
    <location>
        <position position="119"/>
    </location>
</feature>
<feature type="sequence conflict" description="In Ref. 3; AA sequence." evidence="5" ref="3">
    <original>N</original>
    <variation>H</variation>
    <location>
        <position position="135"/>
    </location>
</feature>
<proteinExistence type="evidence at protein level"/>
<sequence>MPVDFTGYWKMLANENFEEYLRALDVNVALRKIANLLKPDKEIVQEGDHMIIRTLSTFRNYIMDFQVGKEFEEDLTGIDDRKCMTTVSWDGDKLECVQKGEKEGRGWTQWIEGDELHLEMRVEGVVCKQVFKKVN</sequence>
<evidence type="ECO:0000250" key="1">
    <source>
        <dbReference type="UniProtKB" id="P09455"/>
    </source>
</evidence>
<evidence type="ECO:0000250" key="2">
    <source>
        <dbReference type="UniProtKB" id="Q00915"/>
    </source>
</evidence>
<evidence type="ECO:0000269" key="3">
    <source>
    </source>
</evidence>
<evidence type="ECO:0000269" key="4">
    <source>
    </source>
</evidence>
<evidence type="ECO:0000305" key="5"/>
<comment type="function">
    <text evidence="1 4">Cytoplasmic retinol-binding protein (PubMed:7744071). Accepts retinol from the transport protein STRA6, and thereby contributes to retinol uptake, storage and retinoid homeostasis.</text>
</comment>
<comment type="subunit">
    <text evidence="1">Interacts (only as retinol-free apoprotein) with STRA6.</text>
</comment>
<comment type="subcellular location">
    <subcellularLocation>
        <location evidence="2">Cytoplasm</location>
    </subcellularLocation>
    <subcellularLocation>
        <location evidence="2">Lipid droplet</location>
    </subcellularLocation>
</comment>
<comment type="domain">
    <text evidence="1">Forms a beta-barrel structure that accommodates hydrophobic ligands in its interior.</text>
</comment>
<comment type="similarity">
    <text evidence="5">Belongs to the calycin superfamily. Fatty-acid binding protein (FABP) family.</text>
</comment>
<reference key="1">
    <citation type="submission" date="2002-04" db="EMBL/GenBank/DDBJ databases">
        <authorList>
            <person name="Jian C."/>
        </authorList>
    </citation>
    <scope>NUCLEOTIDE SEQUENCE [MRNA]</scope>
</reference>
<reference key="2">
    <citation type="submission" date="2005-11" db="EMBL/GenBank/DDBJ databases">
        <authorList>
            <consortium name="NIH - Mammalian Gene Collection (MGC) project"/>
        </authorList>
    </citation>
    <scope>NUCLEOTIDE SEQUENCE [LARGE SCALE MRNA]</scope>
    <source>
        <strain>Crossbred X Angus</strain>
        <tissue>Liver</tissue>
    </source>
</reference>
<reference key="3">
    <citation type="journal article" date="1995" name="Eur. J. Biochem.">
        <title>Interactions with retinol and retinoids of bovine cellular retinol-binding protein.</title>
        <authorList>
            <person name="Malpeli G."/>
            <person name="Stoppini M."/>
            <person name="Zapponi M.C."/>
            <person name="Folli C."/>
            <person name="Berni R."/>
        </authorList>
    </citation>
    <scope>PROTEIN SEQUENCE OF 2-135</scope>
    <scope>FUNCTION</scope>
    <source>
        <tissue>Testis</tissue>
    </source>
</reference>
<reference key="4">
    <citation type="journal article" date="1981" name="FEBS Lett.">
        <title>N-terminal sequence homology among retinoid-binding proteins from bovine retina.</title>
        <authorList>
            <person name="Crabb J.W."/>
            <person name="Saari J.C."/>
        </authorList>
    </citation>
    <scope>PROTEIN SEQUENCE OF 2-31</scope>
    <source>
        <tissue>Retina</tissue>
    </source>
</reference>
<protein>
    <recommendedName>
        <fullName>Retinol-binding protein 1</fullName>
    </recommendedName>
    <alternativeName>
        <fullName>Cellular retinol-binding protein</fullName>
        <shortName>CRBP</shortName>
    </alternativeName>
    <alternativeName>
        <fullName>Cellular retinol-binding protein I</fullName>
        <shortName>CRBP-I</shortName>
    </alternativeName>
</protein>
<organism>
    <name type="scientific">Bos taurus</name>
    <name type="common">Bovine</name>
    <dbReference type="NCBI Taxonomy" id="9913"/>
    <lineage>
        <taxon>Eukaryota</taxon>
        <taxon>Metazoa</taxon>
        <taxon>Chordata</taxon>
        <taxon>Craniata</taxon>
        <taxon>Vertebrata</taxon>
        <taxon>Euteleostomi</taxon>
        <taxon>Mammalia</taxon>
        <taxon>Eutheria</taxon>
        <taxon>Laurasiatheria</taxon>
        <taxon>Artiodactyla</taxon>
        <taxon>Ruminantia</taxon>
        <taxon>Pecora</taxon>
        <taxon>Bovidae</taxon>
        <taxon>Bovinae</taxon>
        <taxon>Bos</taxon>
    </lineage>
</organism>
<dbReference type="EMBL" id="AF502256">
    <property type="protein sequence ID" value="AAQ07459.1"/>
    <property type="molecule type" value="mRNA"/>
</dbReference>
<dbReference type="EMBL" id="BC109589">
    <property type="protein sequence ID" value="AAI09590.1"/>
    <property type="molecule type" value="mRNA"/>
</dbReference>
<dbReference type="PIR" id="S69360">
    <property type="entry name" value="S69360"/>
</dbReference>
<dbReference type="RefSeq" id="NP_001020514.1">
    <property type="nucleotide sequence ID" value="NM_001025343.1"/>
</dbReference>
<dbReference type="SMR" id="P02694"/>
<dbReference type="FunCoup" id="P02694">
    <property type="interactions" value="203"/>
</dbReference>
<dbReference type="STRING" id="9913.ENSBTAP00000058759"/>
<dbReference type="PaxDb" id="9913-ENSBTAP00000015936"/>
<dbReference type="GeneID" id="537379"/>
<dbReference type="KEGG" id="bta:537379"/>
<dbReference type="CTD" id="5947"/>
<dbReference type="eggNOG" id="KOG4015">
    <property type="taxonomic scope" value="Eukaryota"/>
</dbReference>
<dbReference type="HOGENOM" id="CLU_113772_5_1_1"/>
<dbReference type="InParanoid" id="P02694"/>
<dbReference type="OrthoDB" id="354351at2759"/>
<dbReference type="TreeFam" id="TF316894"/>
<dbReference type="Proteomes" id="UP000009136">
    <property type="component" value="Unplaced"/>
</dbReference>
<dbReference type="GO" id="GO:0005829">
    <property type="term" value="C:cytosol"/>
    <property type="evidence" value="ECO:0000318"/>
    <property type="project" value="GO_Central"/>
</dbReference>
<dbReference type="GO" id="GO:0005811">
    <property type="term" value="C:lipid droplet"/>
    <property type="evidence" value="ECO:0000250"/>
    <property type="project" value="UniProtKB"/>
</dbReference>
<dbReference type="GO" id="GO:0005634">
    <property type="term" value="C:nucleus"/>
    <property type="evidence" value="ECO:0000318"/>
    <property type="project" value="GO_Central"/>
</dbReference>
<dbReference type="GO" id="GO:1904768">
    <property type="term" value="F:all-trans-retinol binding"/>
    <property type="evidence" value="ECO:0000314"/>
    <property type="project" value="UniProtKB"/>
</dbReference>
<dbReference type="GO" id="GO:0005504">
    <property type="term" value="F:fatty acid binding"/>
    <property type="evidence" value="ECO:0000318"/>
    <property type="project" value="GO_Central"/>
</dbReference>
<dbReference type="GO" id="GO:0016918">
    <property type="term" value="F:retinal binding"/>
    <property type="evidence" value="ECO:0007669"/>
    <property type="project" value="UniProtKB-KW"/>
</dbReference>
<dbReference type="GO" id="GO:0015908">
    <property type="term" value="P:fatty acid transport"/>
    <property type="evidence" value="ECO:0000318"/>
    <property type="project" value="GO_Central"/>
</dbReference>
<dbReference type="GO" id="GO:0055088">
    <property type="term" value="P:lipid homeostasis"/>
    <property type="evidence" value="ECO:0000250"/>
    <property type="project" value="UniProtKB"/>
</dbReference>
<dbReference type="GO" id="GO:0002138">
    <property type="term" value="P:retinoic acid biosynthetic process"/>
    <property type="evidence" value="ECO:0007669"/>
    <property type="project" value="InterPro"/>
</dbReference>
<dbReference type="GO" id="GO:0042572">
    <property type="term" value="P:retinol metabolic process"/>
    <property type="evidence" value="ECO:0000250"/>
    <property type="project" value="AgBase"/>
</dbReference>
<dbReference type="GO" id="GO:0006776">
    <property type="term" value="P:vitamin A metabolic process"/>
    <property type="evidence" value="ECO:0000250"/>
    <property type="project" value="UniProtKB"/>
</dbReference>
<dbReference type="CDD" id="cd19462">
    <property type="entry name" value="CRBP1"/>
    <property type="match status" value="1"/>
</dbReference>
<dbReference type="FunFam" id="2.40.128.20:FF:000001">
    <property type="entry name" value="Fatty acid-binding protein, adipocyte"/>
    <property type="match status" value="1"/>
</dbReference>
<dbReference type="Gene3D" id="2.40.128.20">
    <property type="match status" value="1"/>
</dbReference>
<dbReference type="InterPro" id="IPR012674">
    <property type="entry name" value="Calycin"/>
</dbReference>
<dbReference type="InterPro" id="IPR031264">
    <property type="entry name" value="CRBP1"/>
</dbReference>
<dbReference type="InterPro" id="IPR000463">
    <property type="entry name" value="Fatty_acid-bd"/>
</dbReference>
<dbReference type="InterPro" id="IPR031259">
    <property type="entry name" value="ILBP"/>
</dbReference>
<dbReference type="InterPro" id="IPR000566">
    <property type="entry name" value="Lipocln_cytosolic_FA-bd_dom"/>
</dbReference>
<dbReference type="PANTHER" id="PTHR11955">
    <property type="entry name" value="FATTY ACID BINDING PROTEIN"/>
    <property type="match status" value="1"/>
</dbReference>
<dbReference type="Pfam" id="PF00061">
    <property type="entry name" value="Lipocalin"/>
    <property type="match status" value="1"/>
</dbReference>
<dbReference type="PRINTS" id="PR00178">
    <property type="entry name" value="FATTYACIDBP"/>
</dbReference>
<dbReference type="SUPFAM" id="SSF50814">
    <property type="entry name" value="Lipocalins"/>
    <property type="match status" value="1"/>
</dbReference>
<dbReference type="PROSITE" id="PS00214">
    <property type="entry name" value="FABP"/>
    <property type="match status" value="1"/>
</dbReference>
<accession>P02694</accession>
<accession>Q53J07</accession>
<accession>Q9TS50</accession>
<gene>
    <name type="primary">RBP1</name>
</gene>
<name>RET1_BOVIN</name>
<keyword id="KW-0963">Cytoplasm</keyword>
<keyword id="KW-0903">Direct protein sequencing</keyword>
<keyword id="KW-0551">Lipid droplet</keyword>
<keyword id="KW-1185">Reference proteome</keyword>
<keyword id="KW-0683">Retinol-binding</keyword>
<keyword id="KW-0813">Transport</keyword>
<keyword id="KW-0845">Vitamin A</keyword>